<name>IF2B_WHEAT</name>
<feature type="chain" id="PRO_0000137413" description="Eukaryotic translation initiation factor 2 subunit beta">
    <location>
        <begin position="1"/>
        <end position="270"/>
    </location>
</feature>
<feature type="region of interest" description="Disordered" evidence="4">
    <location>
        <begin position="1"/>
        <end position="38"/>
    </location>
</feature>
<evidence type="ECO:0000250" key="1"/>
<evidence type="ECO:0000250" key="2">
    <source>
        <dbReference type="UniProtKB" id="P09064"/>
    </source>
</evidence>
<evidence type="ECO:0000250" key="3">
    <source>
        <dbReference type="UniProtKB" id="P56329"/>
    </source>
</evidence>
<evidence type="ECO:0000256" key="4">
    <source>
        <dbReference type="SAM" id="MobiDB-lite"/>
    </source>
</evidence>
<evidence type="ECO:0000305" key="5"/>
<keyword id="KW-0963">Cytoplasm</keyword>
<keyword id="KW-0903">Direct protein sequencing</keyword>
<keyword id="KW-0396">Initiation factor</keyword>
<keyword id="KW-0479">Metal-binding</keyword>
<keyword id="KW-0648">Protein biosynthesis</keyword>
<keyword id="KW-1185">Reference proteome</keyword>
<keyword id="KW-0862">Zinc</keyword>
<keyword id="KW-0863">Zinc-finger</keyword>
<comment type="function">
    <text evidence="1">Component of the eIF2 complex that functions in the early steps of protein synthesis by forming a ternary complex with GTP and initiator tRNA. This complex binds to a 40S ribosomal subunit, followed by mRNA binding to form a 43S pre-initiation complex (43S PIC). Junction of the 60S ribosomal subunit to form the 80S initiation complex is preceded by hydrolysis of the GTP bound to eIF2 and release of an eIF2-GDP binary complex. In order for eIF2 to recycle and catalyze another round of initiation, the GDP bound to eIF2 must exchange with GTP by way of a reaction catalyzed by eIF2B (By similarity).</text>
</comment>
<comment type="subunit">
    <text evidence="2">Eukaryotic translation initiation factor 2 eIF2 is a heterotrimeric complex composed of an alpha, a beta and a gamma subunit.</text>
</comment>
<comment type="subcellular location">
    <subcellularLocation>
        <location evidence="3">Cytoplasm</location>
        <location evidence="3">Cytosol</location>
    </subcellularLocation>
</comment>
<comment type="similarity">
    <text evidence="5">Belongs to the eIF-2-beta/eIF-5 family.</text>
</comment>
<proteinExistence type="evidence at protein level"/>
<organism>
    <name type="scientific">Triticum aestivum</name>
    <name type="common">Wheat</name>
    <dbReference type="NCBI Taxonomy" id="4565"/>
    <lineage>
        <taxon>Eukaryota</taxon>
        <taxon>Viridiplantae</taxon>
        <taxon>Streptophyta</taxon>
        <taxon>Embryophyta</taxon>
        <taxon>Tracheophyta</taxon>
        <taxon>Spermatophyta</taxon>
        <taxon>Magnoliopsida</taxon>
        <taxon>Liliopsida</taxon>
        <taxon>Poales</taxon>
        <taxon>Poaceae</taxon>
        <taxon>BOP clade</taxon>
        <taxon>Pooideae</taxon>
        <taxon>Triticodae</taxon>
        <taxon>Triticeae</taxon>
        <taxon>Triticinae</taxon>
        <taxon>Triticum</taxon>
    </lineage>
</organism>
<reference key="1">
    <citation type="journal article" date="1997" name="Arch. Biochem. Biophys.">
        <title>Assignment of the beta-subunit of wheat eIF2 by protein and DNA sequence analysis and immunoanalysis.</title>
        <authorList>
            <person name="Metz A.M."/>
            <person name="Browning K.S."/>
        </authorList>
    </citation>
    <scope>NUCLEOTIDE SEQUENCE [MRNA]</scope>
    <scope>PARTIAL PROTEIN SEQUENCE</scope>
</reference>
<sequence>MADEEQMERKEEATEIAPFDPTKKKKKKKVVIQDPADEVDKLAEKTEGLSVTESGEASFVGLKKKKKKLVELDPSLVEAGDGEDTLDDQVGEDEQGEGIVLGGATQYPWEGTDRDYKYDELLGRVFNILRENNPDLAGDRRRTVMRPPQVLREGTKKTVFVNFMDLCKTMHRQPEHVMMFLLAEMGTSGSLDGQQRLVIKGRFAPKNFEAILRRYINEYVICHGCKSPDTILSKENRLFFLRCEQCGSSRSVAPIKAGFVAQVGRRKAGT</sequence>
<protein>
    <recommendedName>
        <fullName>Eukaryotic translation initiation factor 2 subunit beta</fullName>
        <shortName>eIF2-beta</shortName>
    </recommendedName>
    <alternativeName>
        <fullName>P38</fullName>
    </alternativeName>
</protein>
<dbReference type="EMBL" id="U87163">
    <property type="protein sequence ID" value="AAB65774.1"/>
    <property type="molecule type" value="mRNA"/>
</dbReference>
<dbReference type="PIR" id="T06992">
    <property type="entry name" value="T06992"/>
</dbReference>
<dbReference type="SMR" id="O24473"/>
<dbReference type="STRING" id="4565.O24473"/>
<dbReference type="PaxDb" id="4565-Traes_4BL_BB500A981.1"/>
<dbReference type="eggNOG" id="KOG2768">
    <property type="taxonomic scope" value="Eukaryota"/>
</dbReference>
<dbReference type="Proteomes" id="UP000019116">
    <property type="component" value="Unplaced"/>
</dbReference>
<dbReference type="ExpressionAtlas" id="O24473">
    <property type="expression patterns" value="baseline and differential"/>
</dbReference>
<dbReference type="GO" id="GO:0005829">
    <property type="term" value="C:cytosol"/>
    <property type="evidence" value="ECO:0007669"/>
    <property type="project" value="UniProtKB-SubCell"/>
</dbReference>
<dbReference type="GO" id="GO:0005850">
    <property type="term" value="C:eukaryotic translation initiation factor 2 complex"/>
    <property type="evidence" value="ECO:0000250"/>
    <property type="project" value="UniProtKB"/>
</dbReference>
<dbReference type="GO" id="GO:0003729">
    <property type="term" value="F:mRNA binding"/>
    <property type="evidence" value="ECO:0000318"/>
    <property type="project" value="GO_Central"/>
</dbReference>
<dbReference type="GO" id="GO:0003743">
    <property type="term" value="F:translation initiation factor activity"/>
    <property type="evidence" value="ECO:0000318"/>
    <property type="project" value="GO_Central"/>
</dbReference>
<dbReference type="GO" id="GO:0031369">
    <property type="term" value="F:translation initiation factor binding"/>
    <property type="evidence" value="ECO:0000318"/>
    <property type="project" value="GO_Central"/>
</dbReference>
<dbReference type="GO" id="GO:0008270">
    <property type="term" value="F:zinc ion binding"/>
    <property type="evidence" value="ECO:0007669"/>
    <property type="project" value="UniProtKB-KW"/>
</dbReference>
<dbReference type="GO" id="GO:0002183">
    <property type="term" value="P:cytoplasmic translational initiation"/>
    <property type="evidence" value="ECO:0000250"/>
    <property type="project" value="UniProtKB"/>
</dbReference>
<dbReference type="GO" id="GO:0001731">
    <property type="term" value="P:formation of translation preinitiation complex"/>
    <property type="evidence" value="ECO:0000318"/>
    <property type="project" value="GO_Central"/>
</dbReference>
<dbReference type="FunFam" id="3.30.30.170:FF:000001">
    <property type="entry name" value="Eukaryotic translation initiation factor 2 subunit"/>
    <property type="match status" value="1"/>
</dbReference>
<dbReference type="Gene3D" id="3.30.30.170">
    <property type="match status" value="1"/>
</dbReference>
<dbReference type="InterPro" id="IPR045196">
    <property type="entry name" value="IF2/IF5"/>
</dbReference>
<dbReference type="InterPro" id="IPR002735">
    <property type="entry name" value="Transl_init_fac_IF2/IF5_dom"/>
</dbReference>
<dbReference type="InterPro" id="IPR016189">
    <property type="entry name" value="Transl_init_fac_IF2/IF5_N"/>
</dbReference>
<dbReference type="InterPro" id="IPR016190">
    <property type="entry name" value="Transl_init_fac_IF2/IF5_Zn-bd"/>
</dbReference>
<dbReference type="PANTHER" id="PTHR23001">
    <property type="entry name" value="EUKARYOTIC TRANSLATION INITIATION FACTOR"/>
    <property type="match status" value="1"/>
</dbReference>
<dbReference type="PANTHER" id="PTHR23001:SF45">
    <property type="entry name" value="EUKARYOTIC TRANSLATION INITIATION FACTOR 2B FAMILY PROTEIN _ EIF-2B FAMILY PROTEIN"/>
    <property type="match status" value="1"/>
</dbReference>
<dbReference type="Pfam" id="PF01873">
    <property type="entry name" value="eIF-5_eIF-2B"/>
    <property type="match status" value="1"/>
</dbReference>
<dbReference type="SMART" id="SM00653">
    <property type="entry name" value="eIF2B_5"/>
    <property type="match status" value="1"/>
</dbReference>
<dbReference type="SUPFAM" id="SSF100966">
    <property type="entry name" value="Translation initiation factor 2 beta, aIF2beta, N-terminal domain"/>
    <property type="match status" value="1"/>
</dbReference>
<dbReference type="SUPFAM" id="SSF75689">
    <property type="entry name" value="Zinc-binding domain of translation initiation factor 2 beta"/>
    <property type="match status" value="1"/>
</dbReference>
<accession>O24473</accession>